<sequence>MRHRKSGRQLNRNSSHRQAMFRNMAGSLVRHEIIKTTVAKAKELRRVVEPLITLAKSDSVANRRLAFARTRDAEVVGKLFTELGPRYQERPGGYTRILKCGLRAGDKAPMAYIELVGRPEAAQAVDVEAAE</sequence>
<proteinExistence type="inferred from homology"/>
<keyword id="KW-1185">Reference proteome</keyword>
<keyword id="KW-0687">Ribonucleoprotein</keyword>
<keyword id="KW-0689">Ribosomal protein</keyword>
<accession>A3DA46</accession>
<evidence type="ECO:0000255" key="1">
    <source>
        <dbReference type="HAMAP-Rule" id="MF_01368"/>
    </source>
</evidence>
<evidence type="ECO:0000305" key="2"/>
<comment type="subunit">
    <text evidence="1">Part of the 50S ribosomal subunit. Contacts protein L32.</text>
</comment>
<comment type="similarity">
    <text evidence="1">Belongs to the bacterial ribosomal protein bL17 family.</text>
</comment>
<organism>
    <name type="scientific">Shewanella baltica (strain OS155 / ATCC BAA-1091)</name>
    <dbReference type="NCBI Taxonomy" id="325240"/>
    <lineage>
        <taxon>Bacteria</taxon>
        <taxon>Pseudomonadati</taxon>
        <taxon>Pseudomonadota</taxon>
        <taxon>Gammaproteobacteria</taxon>
        <taxon>Alteromonadales</taxon>
        <taxon>Shewanellaceae</taxon>
        <taxon>Shewanella</taxon>
    </lineage>
</organism>
<feature type="chain" id="PRO_1000055937" description="Large ribosomal subunit protein bL17">
    <location>
        <begin position="1"/>
        <end position="131"/>
    </location>
</feature>
<protein>
    <recommendedName>
        <fullName evidence="1">Large ribosomal subunit protein bL17</fullName>
    </recommendedName>
    <alternativeName>
        <fullName evidence="2">50S ribosomal protein L17</fullName>
    </alternativeName>
</protein>
<gene>
    <name evidence="1" type="primary">rplQ</name>
    <name type="ordered locus">Sbal_4144</name>
</gene>
<reference key="1">
    <citation type="submission" date="2007-02" db="EMBL/GenBank/DDBJ databases">
        <title>Complete sequence of chromosome of Shewanella baltica OS155.</title>
        <authorList>
            <consortium name="US DOE Joint Genome Institute"/>
            <person name="Copeland A."/>
            <person name="Lucas S."/>
            <person name="Lapidus A."/>
            <person name="Barry K."/>
            <person name="Detter J.C."/>
            <person name="Glavina del Rio T."/>
            <person name="Hammon N."/>
            <person name="Israni S."/>
            <person name="Dalin E."/>
            <person name="Tice H."/>
            <person name="Pitluck S."/>
            <person name="Sims D.R."/>
            <person name="Brettin T."/>
            <person name="Bruce D."/>
            <person name="Han C."/>
            <person name="Tapia R."/>
            <person name="Brainard J."/>
            <person name="Schmutz J."/>
            <person name="Larimer F."/>
            <person name="Land M."/>
            <person name="Hauser L."/>
            <person name="Kyrpides N."/>
            <person name="Mikhailova N."/>
            <person name="Brettar I."/>
            <person name="Klappenbach J."/>
            <person name="Konstantinidis K."/>
            <person name="Rodrigues J."/>
            <person name="Tiedje J."/>
            <person name="Richardson P."/>
        </authorList>
    </citation>
    <scope>NUCLEOTIDE SEQUENCE [LARGE SCALE GENOMIC DNA]</scope>
    <source>
        <strain>OS155 / ATCC BAA-1091</strain>
    </source>
</reference>
<name>RL17_SHEB5</name>
<dbReference type="EMBL" id="CP000563">
    <property type="protein sequence ID" value="ABN63609.1"/>
    <property type="molecule type" value="Genomic_DNA"/>
</dbReference>
<dbReference type="RefSeq" id="WP_006083573.1">
    <property type="nucleotide sequence ID" value="NC_009052.1"/>
</dbReference>
<dbReference type="SMR" id="A3DA46"/>
<dbReference type="STRING" id="325240.Sbal_4144"/>
<dbReference type="GeneID" id="11770581"/>
<dbReference type="KEGG" id="sbl:Sbal_4144"/>
<dbReference type="HOGENOM" id="CLU_074407_2_0_6"/>
<dbReference type="OrthoDB" id="9809073at2"/>
<dbReference type="Proteomes" id="UP000001557">
    <property type="component" value="Chromosome"/>
</dbReference>
<dbReference type="GO" id="GO:0022625">
    <property type="term" value="C:cytosolic large ribosomal subunit"/>
    <property type="evidence" value="ECO:0007669"/>
    <property type="project" value="TreeGrafter"/>
</dbReference>
<dbReference type="GO" id="GO:0003735">
    <property type="term" value="F:structural constituent of ribosome"/>
    <property type="evidence" value="ECO:0007669"/>
    <property type="project" value="InterPro"/>
</dbReference>
<dbReference type="GO" id="GO:0006412">
    <property type="term" value="P:translation"/>
    <property type="evidence" value="ECO:0007669"/>
    <property type="project" value="UniProtKB-UniRule"/>
</dbReference>
<dbReference type="FunFam" id="3.90.1030.10:FF:000001">
    <property type="entry name" value="50S ribosomal protein L17"/>
    <property type="match status" value="1"/>
</dbReference>
<dbReference type="Gene3D" id="3.90.1030.10">
    <property type="entry name" value="Ribosomal protein L17"/>
    <property type="match status" value="1"/>
</dbReference>
<dbReference type="HAMAP" id="MF_01368">
    <property type="entry name" value="Ribosomal_bL17"/>
    <property type="match status" value="1"/>
</dbReference>
<dbReference type="InterPro" id="IPR000456">
    <property type="entry name" value="Ribosomal_bL17"/>
</dbReference>
<dbReference type="InterPro" id="IPR047859">
    <property type="entry name" value="Ribosomal_bL17_CS"/>
</dbReference>
<dbReference type="InterPro" id="IPR036373">
    <property type="entry name" value="Ribosomal_bL17_sf"/>
</dbReference>
<dbReference type="NCBIfam" id="TIGR00059">
    <property type="entry name" value="L17"/>
    <property type="match status" value="1"/>
</dbReference>
<dbReference type="PANTHER" id="PTHR14413:SF16">
    <property type="entry name" value="LARGE RIBOSOMAL SUBUNIT PROTEIN BL17M"/>
    <property type="match status" value="1"/>
</dbReference>
<dbReference type="PANTHER" id="PTHR14413">
    <property type="entry name" value="RIBOSOMAL PROTEIN L17"/>
    <property type="match status" value="1"/>
</dbReference>
<dbReference type="Pfam" id="PF01196">
    <property type="entry name" value="Ribosomal_L17"/>
    <property type="match status" value="1"/>
</dbReference>
<dbReference type="SUPFAM" id="SSF64263">
    <property type="entry name" value="Prokaryotic ribosomal protein L17"/>
    <property type="match status" value="1"/>
</dbReference>
<dbReference type="PROSITE" id="PS01167">
    <property type="entry name" value="RIBOSOMAL_L17"/>
    <property type="match status" value="1"/>
</dbReference>